<accession>B0TLB9</accession>
<keyword id="KW-0276">Fatty acid metabolism</keyword>
<keyword id="KW-0413">Isomerase</keyword>
<keyword id="KW-0442">Lipid degradation</keyword>
<keyword id="KW-0443">Lipid metabolism</keyword>
<keyword id="KW-0456">Lyase</keyword>
<keyword id="KW-0511">Multifunctional enzyme</keyword>
<keyword id="KW-0520">NAD</keyword>
<keyword id="KW-0560">Oxidoreductase</keyword>
<proteinExistence type="inferred from homology"/>
<feature type="chain" id="PRO_1000088083" description="Fatty acid oxidation complex subunit alpha">
    <location>
        <begin position="1"/>
        <end position="717"/>
    </location>
</feature>
<feature type="region of interest" description="Enoyl-CoA hydratase/isomerase" evidence="1">
    <location>
        <begin position="1"/>
        <end position="189"/>
    </location>
</feature>
<feature type="region of interest" description="3-hydroxyacyl-CoA dehydrogenase" evidence="1">
    <location>
        <begin position="311"/>
        <end position="717"/>
    </location>
</feature>
<feature type="active site" description="For 3-hydroxyacyl-CoA dehydrogenase activity" evidence="1">
    <location>
        <position position="450"/>
    </location>
</feature>
<feature type="binding site" evidence="1">
    <location>
        <position position="296"/>
    </location>
    <ligand>
        <name>substrate</name>
    </ligand>
</feature>
<feature type="binding site" evidence="1">
    <location>
        <position position="324"/>
    </location>
    <ligand>
        <name>NAD(+)</name>
        <dbReference type="ChEBI" id="CHEBI:57540"/>
    </ligand>
</feature>
<feature type="binding site" evidence="1">
    <location>
        <position position="343"/>
    </location>
    <ligand>
        <name>NAD(+)</name>
        <dbReference type="ChEBI" id="CHEBI:57540"/>
    </ligand>
</feature>
<feature type="binding site" evidence="1">
    <location>
        <begin position="400"/>
        <end position="402"/>
    </location>
    <ligand>
        <name>NAD(+)</name>
        <dbReference type="ChEBI" id="CHEBI:57540"/>
    </ligand>
</feature>
<feature type="binding site" evidence="1">
    <location>
        <position position="407"/>
    </location>
    <ligand>
        <name>NAD(+)</name>
        <dbReference type="ChEBI" id="CHEBI:57540"/>
    </ligand>
</feature>
<feature type="binding site" evidence="1">
    <location>
        <position position="429"/>
    </location>
    <ligand>
        <name>NAD(+)</name>
        <dbReference type="ChEBI" id="CHEBI:57540"/>
    </ligand>
</feature>
<feature type="binding site" evidence="1">
    <location>
        <position position="453"/>
    </location>
    <ligand>
        <name>NAD(+)</name>
        <dbReference type="ChEBI" id="CHEBI:57540"/>
    </ligand>
</feature>
<feature type="binding site" evidence="1">
    <location>
        <position position="500"/>
    </location>
    <ligand>
        <name>substrate</name>
    </ligand>
</feature>
<feature type="binding site" evidence="1">
    <location>
        <position position="660"/>
    </location>
    <ligand>
        <name>substrate</name>
    </ligand>
</feature>
<feature type="site" description="Important for catalytic activity" evidence="1">
    <location>
        <position position="119"/>
    </location>
</feature>
<feature type="site" description="Important for catalytic activity" evidence="1">
    <location>
        <position position="139"/>
    </location>
</feature>
<sequence length="717" mass="77430">MIYQSPTIEVELLEDNIAHLCFKAQGSVNKFDRETIDSLNAALDSIKQDTSIKALMLSSAKDAFIVGADITEFLGLFAEEDAVLQSWLEQANVVFNKLEDLPFPTLSAINGFALGAGCETILATDFRIADTTARIGLPETKLGIIPGFGGTVRLPRVIGADNALEWITSGKDQRPDAALKVGAIDAVVAPEQLRPAALRMLKDAMAEKLDWQTRRAKKLAPLTLPKLEAMMSFATAKGMVFKIAGKHYPAPMAVISVIEQAAQCGRAEALQIEHQAFIKLAKTEVAQALIGIFLNDQLVKGKAKKAGKLAKKVNSAAVLGAGIMGGGIAYQSASKGTPIVMKDIAQPALDLGLGEAAKLLTAQVKRGRSTPAKMATVLNNITPALDYAPVKDTDIIVEAVVEHPKVKSMVLAEVEEHVSEDAIITSNTSTISINLLAKSLKKPERFCGMHFFNPVHKMPLVEVIRGENSSDETVASVVAYASKMGKTPIVVNDCPGFFVNRVLFPYFAGFSGLLADGADFAAIDKVMEKQFGWPMGPAYLLDVVGLDTGHHAQAVMAEGFPDRMGKSGKDAIDVMFEAERFGQKNNKGFYQYSVDHRGKPKKDLDPTSYELLQAEFGEQKAFESDEIIARTMIPMIIETVRCLEEGIIASPAEADMGLVYGLGFPPFRGGVFRYLDTIGVANFVALADKYAHLGGLYQVTDTMRELAANNGSYYQQA</sequence>
<dbReference type="EC" id="4.2.1.17" evidence="1"/>
<dbReference type="EC" id="5.1.2.3" evidence="1"/>
<dbReference type="EC" id="5.3.3.8" evidence="1"/>
<dbReference type="EC" id="1.1.1.35" evidence="1"/>
<dbReference type="EMBL" id="CP000931">
    <property type="protein sequence ID" value="ABZ74592.1"/>
    <property type="molecule type" value="Genomic_DNA"/>
</dbReference>
<dbReference type="RefSeq" id="WP_012275150.1">
    <property type="nucleotide sequence ID" value="NC_010334.1"/>
</dbReference>
<dbReference type="SMR" id="B0TLB9"/>
<dbReference type="STRING" id="458817.Shal_0016"/>
<dbReference type="KEGG" id="shl:Shal_0016"/>
<dbReference type="eggNOG" id="COG1024">
    <property type="taxonomic scope" value="Bacteria"/>
</dbReference>
<dbReference type="eggNOG" id="COG1250">
    <property type="taxonomic scope" value="Bacteria"/>
</dbReference>
<dbReference type="HOGENOM" id="CLU_009834_16_3_6"/>
<dbReference type="OrthoDB" id="5389341at2"/>
<dbReference type="UniPathway" id="UPA00659"/>
<dbReference type="Proteomes" id="UP000001317">
    <property type="component" value="Chromosome"/>
</dbReference>
<dbReference type="GO" id="GO:0036125">
    <property type="term" value="C:fatty acid beta-oxidation multienzyme complex"/>
    <property type="evidence" value="ECO:0007669"/>
    <property type="project" value="InterPro"/>
</dbReference>
<dbReference type="GO" id="GO:0008692">
    <property type="term" value="F:3-hydroxybutyryl-CoA epimerase activity"/>
    <property type="evidence" value="ECO:0007669"/>
    <property type="project" value="UniProtKB-UniRule"/>
</dbReference>
<dbReference type="GO" id="GO:0004165">
    <property type="term" value="F:delta(3)-delta(2)-enoyl-CoA isomerase activity"/>
    <property type="evidence" value="ECO:0007669"/>
    <property type="project" value="UniProtKB-UniRule"/>
</dbReference>
<dbReference type="GO" id="GO:0004300">
    <property type="term" value="F:enoyl-CoA hydratase activity"/>
    <property type="evidence" value="ECO:0007669"/>
    <property type="project" value="UniProtKB-UniRule"/>
</dbReference>
<dbReference type="GO" id="GO:0016509">
    <property type="term" value="F:long-chain-3-hydroxyacyl-CoA dehydrogenase activity"/>
    <property type="evidence" value="ECO:0007669"/>
    <property type="project" value="TreeGrafter"/>
</dbReference>
<dbReference type="GO" id="GO:0070403">
    <property type="term" value="F:NAD+ binding"/>
    <property type="evidence" value="ECO:0007669"/>
    <property type="project" value="InterPro"/>
</dbReference>
<dbReference type="GO" id="GO:0006635">
    <property type="term" value="P:fatty acid beta-oxidation"/>
    <property type="evidence" value="ECO:0007669"/>
    <property type="project" value="UniProtKB-UniRule"/>
</dbReference>
<dbReference type="CDD" id="cd06558">
    <property type="entry name" value="crotonase-like"/>
    <property type="match status" value="1"/>
</dbReference>
<dbReference type="FunFam" id="1.10.1040.50:FF:000001">
    <property type="entry name" value="Fatty acid oxidation complex subunit alpha"/>
    <property type="match status" value="1"/>
</dbReference>
<dbReference type="FunFam" id="3.40.50.720:FF:000009">
    <property type="entry name" value="Fatty oxidation complex, alpha subunit"/>
    <property type="match status" value="1"/>
</dbReference>
<dbReference type="Gene3D" id="1.10.1040.50">
    <property type="match status" value="1"/>
</dbReference>
<dbReference type="Gene3D" id="3.90.226.10">
    <property type="entry name" value="2-enoyl-CoA Hydratase, Chain A, domain 1"/>
    <property type="match status" value="1"/>
</dbReference>
<dbReference type="Gene3D" id="3.40.50.720">
    <property type="entry name" value="NAD(P)-binding Rossmann-like Domain"/>
    <property type="match status" value="1"/>
</dbReference>
<dbReference type="HAMAP" id="MF_01621">
    <property type="entry name" value="FadB"/>
    <property type="match status" value="1"/>
</dbReference>
<dbReference type="InterPro" id="IPR006180">
    <property type="entry name" value="3-OHacyl-CoA_DH_CS"/>
</dbReference>
<dbReference type="InterPro" id="IPR006176">
    <property type="entry name" value="3-OHacyl-CoA_DH_NAD-bd"/>
</dbReference>
<dbReference type="InterPro" id="IPR006108">
    <property type="entry name" value="3HC_DH_C"/>
</dbReference>
<dbReference type="InterPro" id="IPR008927">
    <property type="entry name" value="6-PGluconate_DH-like_C_sf"/>
</dbReference>
<dbReference type="InterPro" id="IPR029045">
    <property type="entry name" value="ClpP/crotonase-like_dom_sf"/>
</dbReference>
<dbReference type="InterPro" id="IPR018376">
    <property type="entry name" value="Enoyl-CoA_hyd/isom_CS"/>
</dbReference>
<dbReference type="InterPro" id="IPR001753">
    <property type="entry name" value="Enoyl-CoA_hydra/iso"/>
</dbReference>
<dbReference type="InterPro" id="IPR050136">
    <property type="entry name" value="FA_oxidation_alpha_subunit"/>
</dbReference>
<dbReference type="InterPro" id="IPR012799">
    <property type="entry name" value="FadB"/>
</dbReference>
<dbReference type="InterPro" id="IPR036291">
    <property type="entry name" value="NAD(P)-bd_dom_sf"/>
</dbReference>
<dbReference type="NCBIfam" id="TIGR02437">
    <property type="entry name" value="FadB"/>
    <property type="match status" value="1"/>
</dbReference>
<dbReference type="NCBIfam" id="NF008727">
    <property type="entry name" value="PRK11730.1"/>
    <property type="match status" value="1"/>
</dbReference>
<dbReference type="PANTHER" id="PTHR43612">
    <property type="entry name" value="TRIFUNCTIONAL ENZYME SUBUNIT ALPHA"/>
    <property type="match status" value="1"/>
</dbReference>
<dbReference type="PANTHER" id="PTHR43612:SF3">
    <property type="entry name" value="TRIFUNCTIONAL ENZYME SUBUNIT ALPHA, MITOCHONDRIAL"/>
    <property type="match status" value="1"/>
</dbReference>
<dbReference type="Pfam" id="PF00725">
    <property type="entry name" value="3HCDH"/>
    <property type="match status" value="1"/>
</dbReference>
<dbReference type="Pfam" id="PF02737">
    <property type="entry name" value="3HCDH_N"/>
    <property type="match status" value="1"/>
</dbReference>
<dbReference type="Pfam" id="PF00378">
    <property type="entry name" value="ECH_1"/>
    <property type="match status" value="1"/>
</dbReference>
<dbReference type="SUPFAM" id="SSF48179">
    <property type="entry name" value="6-phosphogluconate dehydrogenase C-terminal domain-like"/>
    <property type="match status" value="2"/>
</dbReference>
<dbReference type="SUPFAM" id="SSF52096">
    <property type="entry name" value="ClpP/crotonase"/>
    <property type="match status" value="1"/>
</dbReference>
<dbReference type="SUPFAM" id="SSF51735">
    <property type="entry name" value="NAD(P)-binding Rossmann-fold domains"/>
    <property type="match status" value="1"/>
</dbReference>
<dbReference type="PROSITE" id="PS00067">
    <property type="entry name" value="3HCDH"/>
    <property type="match status" value="1"/>
</dbReference>
<dbReference type="PROSITE" id="PS00166">
    <property type="entry name" value="ENOYL_COA_HYDRATASE"/>
    <property type="match status" value="1"/>
</dbReference>
<comment type="function">
    <text evidence="1">Involved in the aerobic and anaerobic degradation of long-chain fatty acids via beta-oxidation cycle. Catalyzes the formation of 3-oxoacyl-CoA from enoyl-CoA via L-3-hydroxyacyl-CoA. It can also use D-3-hydroxyacyl-CoA and cis-3-enoyl-CoA as substrate.</text>
</comment>
<comment type="catalytic activity">
    <reaction evidence="1">
        <text>a (3S)-3-hydroxyacyl-CoA + NAD(+) = a 3-oxoacyl-CoA + NADH + H(+)</text>
        <dbReference type="Rhea" id="RHEA:22432"/>
        <dbReference type="ChEBI" id="CHEBI:15378"/>
        <dbReference type="ChEBI" id="CHEBI:57318"/>
        <dbReference type="ChEBI" id="CHEBI:57540"/>
        <dbReference type="ChEBI" id="CHEBI:57945"/>
        <dbReference type="ChEBI" id="CHEBI:90726"/>
        <dbReference type="EC" id="1.1.1.35"/>
    </reaction>
</comment>
<comment type="catalytic activity">
    <reaction evidence="1">
        <text>a (3S)-3-hydroxyacyl-CoA = a (2E)-enoyl-CoA + H2O</text>
        <dbReference type="Rhea" id="RHEA:16105"/>
        <dbReference type="ChEBI" id="CHEBI:15377"/>
        <dbReference type="ChEBI" id="CHEBI:57318"/>
        <dbReference type="ChEBI" id="CHEBI:58856"/>
        <dbReference type="EC" id="4.2.1.17"/>
    </reaction>
</comment>
<comment type="catalytic activity">
    <reaction evidence="1">
        <text>a 4-saturated-(3S)-3-hydroxyacyl-CoA = a (3E)-enoyl-CoA + H2O</text>
        <dbReference type="Rhea" id="RHEA:20724"/>
        <dbReference type="ChEBI" id="CHEBI:15377"/>
        <dbReference type="ChEBI" id="CHEBI:58521"/>
        <dbReference type="ChEBI" id="CHEBI:137480"/>
        <dbReference type="EC" id="4.2.1.17"/>
    </reaction>
</comment>
<comment type="catalytic activity">
    <reaction evidence="1">
        <text>(3S)-3-hydroxybutanoyl-CoA = (3R)-3-hydroxybutanoyl-CoA</text>
        <dbReference type="Rhea" id="RHEA:21760"/>
        <dbReference type="ChEBI" id="CHEBI:57315"/>
        <dbReference type="ChEBI" id="CHEBI:57316"/>
        <dbReference type="EC" id="5.1.2.3"/>
    </reaction>
</comment>
<comment type="catalytic activity">
    <reaction evidence="1">
        <text>a (3Z)-enoyl-CoA = a 4-saturated (2E)-enoyl-CoA</text>
        <dbReference type="Rhea" id="RHEA:45900"/>
        <dbReference type="ChEBI" id="CHEBI:85097"/>
        <dbReference type="ChEBI" id="CHEBI:85489"/>
        <dbReference type="EC" id="5.3.3.8"/>
    </reaction>
</comment>
<comment type="catalytic activity">
    <reaction evidence="1">
        <text>a (3E)-enoyl-CoA = a 4-saturated (2E)-enoyl-CoA</text>
        <dbReference type="Rhea" id="RHEA:45228"/>
        <dbReference type="ChEBI" id="CHEBI:58521"/>
        <dbReference type="ChEBI" id="CHEBI:85097"/>
        <dbReference type="EC" id="5.3.3.8"/>
    </reaction>
</comment>
<comment type="pathway">
    <text evidence="1">Lipid metabolism; fatty acid beta-oxidation.</text>
</comment>
<comment type="subunit">
    <text evidence="1">Heterotetramer of two alpha chains (FadB) and two beta chains (FadA).</text>
</comment>
<comment type="similarity">
    <text evidence="1">In the N-terminal section; belongs to the enoyl-CoA hydratase/isomerase family.</text>
</comment>
<comment type="similarity">
    <text evidence="1">In the C-terminal section; belongs to the 3-hydroxyacyl-CoA dehydrogenase family.</text>
</comment>
<reference key="1">
    <citation type="submission" date="2008-01" db="EMBL/GenBank/DDBJ databases">
        <title>Complete sequence of Shewanella halifaxensis HAW-EB4.</title>
        <authorList>
            <consortium name="US DOE Joint Genome Institute"/>
            <person name="Copeland A."/>
            <person name="Lucas S."/>
            <person name="Lapidus A."/>
            <person name="Glavina del Rio T."/>
            <person name="Dalin E."/>
            <person name="Tice H."/>
            <person name="Bruce D."/>
            <person name="Goodwin L."/>
            <person name="Pitluck S."/>
            <person name="Sims D."/>
            <person name="Brettin T."/>
            <person name="Detter J.C."/>
            <person name="Han C."/>
            <person name="Kuske C.R."/>
            <person name="Schmutz J."/>
            <person name="Larimer F."/>
            <person name="Land M."/>
            <person name="Hauser L."/>
            <person name="Kyrpides N."/>
            <person name="Kim E."/>
            <person name="Zhao J.-S."/>
            <person name="Richardson P."/>
        </authorList>
    </citation>
    <scope>NUCLEOTIDE SEQUENCE [LARGE SCALE GENOMIC DNA]</scope>
    <source>
        <strain>HAW-EB4</strain>
    </source>
</reference>
<name>FADB_SHEHH</name>
<evidence type="ECO:0000255" key="1">
    <source>
        <dbReference type="HAMAP-Rule" id="MF_01621"/>
    </source>
</evidence>
<gene>
    <name evidence="1" type="primary">fadB</name>
    <name type="ordered locus">Shal_0016</name>
</gene>
<organism>
    <name type="scientific">Shewanella halifaxensis (strain HAW-EB4)</name>
    <dbReference type="NCBI Taxonomy" id="458817"/>
    <lineage>
        <taxon>Bacteria</taxon>
        <taxon>Pseudomonadati</taxon>
        <taxon>Pseudomonadota</taxon>
        <taxon>Gammaproteobacteria</taxon>
        <taxon>Alteromonadales</taxon>
        <taxon>Shewanellaceae</taxon>
        <taxon>Shewanella</taxon>
    </lineage>
</organism>
<protein>
    <recommendedName>
        <fullName evidence="1">Fatty acid oxidation complex subunit alpha</fullName>
    </recommendedName>
    <domain>
        <recommendedName>
            <fullName evidence="1">Enoyl-CoA hydratase/Delta(3)-cis-Delta(2)-trans-enoyl-CoA isomerase/3-hydroxybutyryl-CoA epimerase</fullName>
            <ecNumber evidence="1">4.2.1.17</ecNumber>
            <ecNumber evidence="1">5.1.2.3</ecNumber>
            <ecNumber evidence="1">5.3.3.8</ecNumber>
        </recommendedName>
    </domain>
    <domain>
        <recommendedName>
            <fullName evidence="1">3-hydroxyacyl-CoA dehydrogenase</fullName>
            <ecNumber evidence="1">1.1.1.35</ecNumber>
        </recommendedName>
    </domain>
</protein>